<gene>
    <name evidence="1" type="primary">aroB</name>
    <name type="ordered locus">SpyM3_1280</name>
</gene>
<proteinExistence type="inferred from homology"/>
<protein>
    <recommendedName>
        <fullName evidence="1">3-dehydroquinate synthase</fullName>
        <shortName evidence="1">DHQS</shortName>
        <ecNumber evidence="1">4.2.3.4</ecNumber>
    </recommendedName>
</protein>
<sequence>MPQTLHVHSRVKDYDILFTDHVLKTLADCLGERKQRKLLFITDQTVYHLYQTLFEEFAQQYNAFVHVYPSGGQSKSLERVSAIYDQLIAENFSKKDMIVTIGGGVVGDLGGFVAATYYRGIPYIQIPTTLLSQVDSSIGGKVGVHFKGLTNMIGSIYPPEAIIISTTFLETLPQREFSCGISEMLKIGFIHDRPLFQQLRDFQKETDKQGLERLIYQSISNKKRIVEQDEFENGLRMSLNFGHTLGHAIESLCHHDFYHHGEAIAIGMVVDAKLAVSKGLLPKEDLDSLLQVFERYQLPTTLERADVSATSLFDVFKTDKKNSEQHIIFILPTETGFTTLAINKDDHQFVEKLDSLL</sequence>
<name>AROB_STRP3</name>
<accession>P0CZ80</accession>
<accession>Q8K6M3</accession>
<dbReference type="EC" id="4.2.3.4" evidence="1"/>
<dbReference type="EMBL" id="AE014074">
    <property type="protein sequence ID" value="AAM79887.1"/>
    <property type="molecule type" value="Genomic_DNA"/>
</dbReference>
<dbReference type="RefSeq" id="WP_011054780.1">
    <property type="nucleotide sequence ID" value="NC_004070.1"/>
</dbReference>
<dbReference type="SMR" id="P0CZ80"/>
<dbReference type="KEGG" id="spg:SpyM3_1280"/>
<dbReference type="HOGENOM" id="CLU_001201_0_1_9"/>
<dbReference type="UniPathway" id="UPA00053">
    <property type="reaction ID" value="UER00085"/>
</dbReference>
<dbReference type="Proteomes" id="UP000000564">
    <property type="component" value="Chromosome"/>
</dbReference>
<dbReference type="GO" id="GO:0005737">
    <property type="term" value="C:cytoplasm"/>
    <property type="evidence" value="ECO:0007669"/>
    <property type="project" value="UniProtKB-SubCell"/>
</dbReference>
<dbReference type="GO" id="GO:0003856">
    <property type="term" value="F:3-dehydroquinate synthase activity"/>
    <property type="evidence" value="ECO:0007669"/>
    <property type="project" value="UniProtKB-UniRule"/>
</dbReference>
<dbReference type="GO" id="GO:0046872">
    <property type="term" value="F:metal ion binding"/>
    <property type="evidence" value="ECO:0007669"/>
    <property type="project" value="UniProtKB-KW"/>
</dbReference>
<dbReference type="GO" id="GO:0000166">
    <property type="term" value="F:nucleotide binding"/>
    <property type="evidence" value="ECO:0007669"/>
    <property type="project" value="UniProtKB-KW"/>
</dbReference>
<dbReference type="GO" id="GO:0008652">
    <property type="term" value="P:amino acid biosynthetic process"/>
    <property type="evidence" value="ECO:0007669"/>
    <property type="project" value="UniProtKB-KW"/>
</dbReference>
<dbReference type="GO" id="GO:0009073">
    <property type="term" value="P:aromatic amino acid family biosynthetic process"/>
    <property type="evidence" value="ECO:0007669"/>
    <property type="project" value="UniProtKB-KW"/>
</dbReference>
<dbReference type="GO" id="GO:0009423">
    <property type="term" value="P:chorismate biosynthetic process"/>
    <property type="evidence" value="ECO:0007669"/>
    <property type="project" value="UniProtKB-UniRule"/>
</dbReference>
<dbReference type="CDD" id="cd08195">
    <property type="entry name" value="DHQS"/>
    <property type="match status" value="1"/>
</dbReference>
<dbReference type="FunFam" id="3.40.50.1970:FF:000007">
    <property type="entry name" value="Pentafunctional AROM polypeptide"/>
    <property type="match status" value="1"/>
</dbReference>
<dbReference type="Gene3D" id="3.40.50.1970">
    <property type="match status" value="1"/>
</dbReference>
<dbReference type="Gene3D" id="1.20.1090.10">
    <property type="entry name" value="Dehydroquinate synthase-like - alpha domain"/>
    <property type="match status" value="1"/>
</dbReference>
<dbReference type="HAMAP" id="MF_00110">
    <property type="entry name" value="DHQ_synthase"/>
    <property type="match status" value="1"/>
</dbReference>
<dbReference type="InterPro" id="IPR050071">
    <property type="entry name" value="Dehydroquinate_synthase"/>
</dbReference>
<dbReference type="InterPro" id="IPR016037">
    <property type="entry name" value="DHQ_synth_AroB"/>
</dbReference>
<dbReference type="InterPro" id="IPR030963">
    <property type="entry name" value="DHQ_synth_fam"/>
</dbReference>
<dbReference type="InterPro" id="IPR030960">
    <property type="entry name" value="DHQS/DOIS_N"/>
</dbReference>
<dbReference type="InterPro" id="IPR056179">
    <property type="entry name" value="DHQS_C"/>
</dbReference>
<dbReference type="NCBIfam" id="TIGR01357">
    <property type="entry name" value="aroB"/>
    <property type="match status" value="1"/>
</dbReference>
<dbReference type="PANTHER" id="PTHR43622">
    <property type="entry name" value="3-DEHYDROQUINATE SYNTHASE"/>
    <property type="match status" value="1"/>
</dbReference>
<dbReference type="PANTHER" id="PTHR43622:SF1">
    <property type="entry name" value="3-DEHYDROQUINATE SYNTHASE"/>
    <property type="match status" value="1"/>
</dbReference>
<dbReference type="Pfam" id="PF01761">
    <property type="entry name" value="DHQ_synthase"/>
    <property type="match status" value="1"/>
</dbReference>
<dbReference type="Pfam" id="PF24621">
    <property type="entry name" value="DHQS_C"/>
    <property type="match status" value="1"/>
</dbReference>
<dbReference type="PIRSF" id="PIRSF001455">
    <property type="entry name" value="DHQ_synth"/>
    <property type="match status" value="1"/>
</dbReference>
<dbReference type="SUPFAM" id="SSF56796">
    <property type="entry name" value="Dehydroquinate synthase-like"/>
    <property type="match status" value="1"/>
</dbReference>
<reference key="1">
    <citation type="journal article" date="2002" name="Proc. Natl. Acad. Sci. U.S.A.">
        <title>Genome sequence of a serotype M3 strain of group A Streptococcus: phage-encoded toxins, the high-virulence phenotype, and clone emergence.</title>
        <authorList>
            <person name="Beres S.B."/>
            <person name="Sylva G.L."/>
            <person name="Barbian K.D."/>
            <person name="Lei B."/>
            <person name="Hoff J.S."/>
            <person name="Mammarella N.D."/>
            <person name="Liu M.-Y."/>
            <person name="Smoot J.C."/>
            <person name="Porcella S.F."/>
            <person name="Parkins L.D."/>
            <person name="Campbell D.S."/>
            <person name="Smith T.M."/>
            <person name="McCormick J.K."/>
            <person name="Leung D.Y.M."/>
            <person name="Schlievert P.M."/>
            <person name="Musser J.M."/>
        </authorList>
    </citation>
    <scope>NUCLEOTIDE SEQUENCE [LARGE SCALE GENOMIC DNA]</scope>
    <source>
        <strain>ATCC BAA-595 / MGAS315</strain>
    </source>
</reference>
<organism>
    <name type="scientific">Streptococcus pyogenes serotype M3 (strain ATCC BAA-595 / MGAS315)</name>
    <dbReference type="NCBI Taxonomy" id="198466"/>
    <lineage>
        <taxon>Bacteria</taxon>
        <taxon>Bacillati</taxon>
        <taxon>Bacillota</taxon>
        <taxon>Bacilli</taxon>
        <taxon>Lactobacillales</taxon>
        <taxon>Streptococcaceae</taxon>
        <taxon>Streptococcus</taxon>
    </lineage>
</organism>
<feature type="chain" id="PRO_0000140795" description="3-dehydroquinate synthase">
    <location>
        <begin position="1"/>
        <end position="357"/>
    </location>
</feature>
<feature type="binding site" evidence="1">
    <location>
        <begin position="104"/>
        <end position="108"/>
    </location>
    <ligand>
        <name>NAD(+)</name>
        <dbReference type="ChEBI" id="CHEBI:57540"/>
    </ligand>
</feature>
<feature type="binding site" evidence="1">
    <location>
        <begin position="128"/>
        <end position="129"/>
    </location>
    <ligand>
        <name>NAD(+)</name>
        <dbReference type="ChEBI" id="CHEBI:57540"/>
    </ligand>
</feature>
<feature type="binding site" evidence="1">
    <location>
        <position position="141"/>
    </location>
    <ligand>
        <name>NAD(+)</name>
        <dbReference type="ChEBI" id="CHEBI:57540"/>
    </ligand>
</feature>
<feature type="binding site" evidence="1">
    <location>
        <begin position="168"/>
        <end position="171"/>
    </location>
    <ligand>
        <name>NAD(+)</name>
        <dbReference type="ChEBI" id="CHEBI:57540"/>
    </ligand>
</feature>
<feature type="binding site" evidence="1">
    <location>
        <position position="183"/>
    </location>
    <ligand>
        <name>Zn(2+)</name>
        <dbReference type="ChEBI" id="CHEBI:29105"/>
    </ligand>
</feature>
<feature type="binding site" evidence="1">
    <location>
        <position position="243"/>
    </location>
    <ligand>
        <name>Zn(2+)</name>
        <dbReference type="ChEBI" id="CHEBI:29105"/>
    </ligand>
</feature>
<feature type="binding site" evidence="1">
    <location>
        <position position="260"/>
    </location>
    <ligand>
        <name>Zn(2+)</name>
        <dbReference type="ChEBI" id="CHEBI:29105"/>
    </ligand>
</feature>
<keyword id="KW-0028">Amino-acid biosynthesis</keyword>
<keyword id="KW-0057">Aromatic amino acid biosynthesis</keyword>
<keyword id="KW-0170">Cobalt</keyword>
<keyword id="KW-0963">Cytoplasm</keyword>
<keyword id="KW-0456">Lyase</keyword>
<keyword id="KW-0479">Metal-binding</keyword>
<keyword id="KW-0520">NAD</keyword>
<keyword id="KW-0547">Nucleotide-binding</keyword>
<keyword id="KW-0862">Zinc</keyword>
<comment type="function">
    <text evidence="1">Catalyzes the conversion of 3-deoxy-D-arabino-heptulosonate 7-phosphate (DAHP) to dehydroquinate (DHQ).</text>
</comment>
<comment type="catalytic activity">
    <reaction evidence="1">
        <text>7-phospho-2-dehydro-3-deoxy-D-arabino-heptonate = 3-dehydroquinate + phosphate</text>
        <dbReference type="Rhea" id="RHEA:21968"/>
        <dbReference type="ChEBI" id="CHEBI:32364"/>
        <dbReference type="ChEBI" id="CHEBI:43474"/>
        <dbReference type="ChEBI" id="CHEBI:58394"/>
        <dbReference type="EC" id="4.2.3.4"/>
    </reaction>
</comment>
<comment type="cofactor">
    <cofactor evidence="1">
        <name>NAD(+)</name>
        <dbReference type="ChEBI" id="CHEBI:57540"/>
    </cofactor>
</comment>
<comment type="cofactor">
    <cofactor evidence="1">
        <name>Co(2+)</name>
        <dbReference type="ChEBI" id="CHEBI:48828"/>
    </cofactor>
    <cofactor evidence="1">
        <name>Zn(2+)</name>
        <dbReference type="ChEBI" id="CHEBI:29105"/>
    </cofactor>
    <text evidence="1">Binds 1 divalent metal cation per subunit. Can use either Co(2+) or Zn(2+).</text>
</comment>
<comment type="pathway">
    <text evidence="1">Metabolic intermediate biosynthesis; chorismate biosynthesis; chorismate from D-erythrose 4-phosphate and phosphoenolpyruvate: step 2/7.</text>
</comment>
<comment type="subcellular location">
    <subcellularLocation>
        <location evidence="1">Cytoplasm</location>
    </subcellularLocation>
</comment>
<comment type="similarity">
    <text evidence="1">Belongs to the sugar phosphate cyclases superfamily. Dehydroquinate synthase family.</text>
</comment>
<evidence type="ECO:0000255" key="1">
    <source>
        <dbReference type="HAMAP-Rule" id="MF_00110"/>
    </source>
</evidence>